<dbReference type="EMBL" id="AJ005830">
    <property type="protein sequence ID" value="CAA06726.1"/>
    <property type="molecule type" value="Genomic_DNA"/>
</dbReference>
<dbReference type="EMBL" id="AF067848">
    <property type="protein sequence ID" value="AAC19242.1"/>
    <property type="molecule type" value="Genomic_DNA"/>
</dbReference>
<dbReference type="EMBL" id="M87049">
    <property type="protein sequence ID" value="AAA67634.1"/>
    <property type="status" value="ALT_FRAME"/>
    <property type="molecule type" value="Genomic_DNA"/>
</dbReference>
<dbReference type="EMBL" id="M87049">
    <property type="protein sequence ID" value="AAA67635.1"/>
    <property type="status" value="ALT_FRAME"/>
    <property type="molecule type" value="Genomic_DNA"/>
</dbReference>
<dbReference type="EMBL" id="U00096">
    <property type="protein sequence ID" value="AAC76842.1"/>
    <property type="molecule type" value="Genomic_DNA"/>
</dbReference>
<dbReference type="EMBL" id="AP009048">
    <property type="protein sequence ID" value="BAE77463.1"/>
    <property type="molecule type" value="Genomic_DNA"/>
</dbReference>
<dbReference type="PIR" id="H65188">
    <property type="entry name" value="H65188"/>
</dbReference>
<dbReference type="PIR" id="S30728">
    <property type="entry name" value="S30728"/>
</dbReference>
<dbReference type="RefSeq" id="NP_418282.1">
    <property type="nucleotide sequence ID" value="NC_000913.3"/>
</dbReference>
<dbReference type="RefSeq" id="WP_000109943.1">
    <property type="nucleotide sequence ID" value="NZ_STEB01000021.1"/>
</dbReference>
<dbReference type="SMR" id="P69423"/>
<dbReference type="BioGRID" id="4259567">
    <property type="interactions" value="437"/>
</dbReference>
<dbReference type="ComplexPortal" id="CPX-3445">
    <property type="entry name" value="Twin-arginine translocation complex"/>
</dbReference>
<dbReference type="DIP" id="DIP-58537N"/>
<dbReference type="FunCoup" id="P69423">
    <property type="interactions" value="762"/>
</dbReference>
<dbReference type="IntAct" id="P69423">
    <property type="interactions" value="7"/>
</dbReference>
<dbReference type="MINT" id="P69423"/>
<dbReference type="STRING" id="511145.b3839"/>
<dbReference type="TCDB" id="2.A.64.1.1">
    <property type="family name" value="the twin arginine targeting (tat) family"/>
</dbReference>
<dbReference type="PaxDb" id="511145-b3839"/>
<dbReference type="EnsemblBacteria" id="AAC76842">
    <property type="protein sequence ID" value="AAC76842"/>
    <property type="gene ID" value="b3839"/>
</dbReference>
<dbReference type="GeneID" id="93778097"/>
<dbReference type="GeneID" id="948328"/>
<dbReference type="KEGG" id="ecj:JW3815"/>
<dbReference type="KEGG" id="eco:b3839"/>
<dbReference type="KEGG" id="ecoc:C3026_20765"/>
<dbReference type="PATRIC" id="fig|1411691.4.peg.2870"/>
<dbReference type="EchoBASE" id="EB1445"/>
<dbReference type="eggNOG" id="COG0805">
    <property type="taxonomic scope" value="Bacteria"/>
</dbReference>
<dbReference type="HOGENOM" id="CLU_031942_1_1_6"/>
<dbReference type="InParanoid" id="P69423"/>
<dbReference type="OMA" id="AWAFIAP"/>
<dbReference type="OrthoDB" id="9777044at2"/>
<dbReference type="PhylomeDB" id="P69423"/>
<dbReference type="BioCyc" id="EcoCyc:EG11479-MONOMER"/>
<dbReference type="BioCyc" id="MetaCyc:EG11479-MONOMER"/>
<dbReference type="PHI-base" id="PHI:10983"/>
<dbReference type="PRO" id="PR:P69423"/>
<dbReference type="Proteomes" id="UP000000625">
    <property type="component" value="Chromosome"/>
</dbReference>
<dbReference type="GO" id="GO:0016020">
    <property type="term" value="C:membrane"/>
    <property type="evidence" value="ECO:0000314"/>
    <property type="project" value="EcoliWiki"/>
</dbReference>
<dbReference type="GO" id="GO:0005886">
    <property type="term" value="C:plasma membrane"/>
    <property type="evidence" value="ECO:0000314"/>
    <property type="project" value="EcoCyc"/>
</dbReference>
<dbReference type="GO" id="GO:0033281">
    <property type="term" value="C:TAT protein transport complex"/>
    <property type="evidence" value="ECO:0000314"/>
    <property type="project" value="EcoCyc"/>
</dbReference>
<dbReference type="GO" id="GO:0042802">
    <property type="term" value="F:identical protein binding"/>
    <property type="evidence" value="ECO:0000314"/>
    <property type="project" value="EcoCyc"/>
</dbReference>
<dbReference type="GO" id="GO:0008320">
    <property type="term" value="F:protein transmembrane transporter activity"/>
    <property type="evidence" value="ECO:0000315"/>
    <property type="project" value="EcoliWiki"/>
</dbReference>
<dbReference type="GO" id="GO:0009977">
    <property type="term" value="F:proton motive force dependent protein transmembrane transporter activity"/>
    <property type="evidence" value="ECO:0000314"/>
    <property type="project" value="EcoCyc"/>
</dbReference>
<dbReference type="GO" id="GO:0065002">
    <property type="term" value="P:intracellular protein transmembrane transport"/>
    <property type="evidence" value="ECO:0000314"/>
    <property type="project" value="EcoCyc"/>
</dbReference>
<dbReference type="GO" id="GO:0043953">
    <property type="term" value="P:protein transport by the Tat complex"/>
    <property type="evidence" value="ECO:0000314"/>
    <property type="project" value="EcoCyc"/>
</dbReference>
<dbReference type="GO" id="GO:0009314">
    <property type="term" value="P:response to radiation"/>
    <property type="evidence" value="ECO:0000315"/>
    <property type="project" value="EcoCyc"/>
</dbReference>
<dbReference type="HAMAP" id="MF_00902">
    <property type="entry name" value="TatC"/>
    <property type="match status" value="1"/>
</dbReference>
<dbReference type="InterPro" id="IPR019820">
    <property type="entry name" value="Sec-indep_translocase_CS"/>
</dbReference>
<dbReference type="InterPro" id="IPR002033">
    <property type="entry name" value="TatC"/>
</dbReference>
<dbReference type="NCBIfam" id="NF008174">
    <property type="entry name" value="PRK10921.1"/>
    <property type="match status" value="1"/>
</dbReference>
<dbReference type="NCBIfam" id="TIGR00945">
    <property type="entry name" value="tatC"/>
    <property type="match status" value="1"/>
</dbReference>
<dbReference type="PANTHER" id="PTHR30371">
    <property type="entry name" value="SEC-INDEPENDENT PROTEIN TRANSLOCASE PROTEIN TATC"/>
    <property type="match status" value="1"/>
</dbReference>
<dbReference type="PANTHER" id="PTHR30371:SF0">
    <property type="entry name" value="SEC-INDEPENDENT PROTEIN TRANSLOCASE PROTEIN TATC, CHLOROPLASTIC-RELATED"/>
    <property type="match status" value="1"/>
</dbReference>
<dbReference type="Pfam" id="PF00902">
    <property type="entry name" value="TatC"/>
    <property type="match status" value="1"/>
</dbReference>
<dbReference type="PRINTS" id="PR01840">
    <property type="entry name" value="TATCFAMILY"/>
</dbReference>
<dbReference type="PROSITE" id="PS01218">
    <property type="entry name" value="TATC"/>
    <property type="match status" value="1"/>
</dbReference>
<reference key="1">
    <citation type="journal article" date="1998" name="EMBO J.">
        <title>Overlapping functions of components of a bacterial Sec-independent protein export pathway.</title>
        <authorList>
            <person name="Sargent F."/>
            <person name="Bogsch E.G."/>
            <person name="Stanley N.R."/>
            <person name="Wexler M."/>
            <person name="Robinson C."/>
            <person name="Berks B.C."/>
            <person name="Palmer T."/>
        </authorList>
    </citation>
    <scope>NUCLEOTIDE SEQUENCE [GENOMIC DNA]</scope>
    <scope>CHARACTERIZATION</scope>
    <source>
        <strain>K12</strain>
    </source>
</reference>
<reference key="2">
    <citation type="journal article" date="1998" name="Cell">
        <title>A novel and ubiquitous system for membrane targeting and secretion of cofactor-containing proteins.</title>
        <authorList>
            <person name="Weiner J.H."/>
            <person name="Bilous P.T."/>
            <person name="Shaw G.M."/>
            <person name="Lubitz S.P."/>
            <person name="Frost L."/>
            <person name="Thomas G.H."/>
            <person name="Cole J.A."/>
            <person name="Turner R.J."/>
        </authorList>
    </citation>
    <scope>NUCLEOTIDE SEQUENCE [GENOMIC DNA]</scope>
    <source>
        <strain>ATCC 33694 / HB101</strain>
    </source>
</reference>
<reference key="3">
    <citation type="journal article" date="1992" name="Science">
        <title>Analysis of the Escherichia coli genome: DNA sequence of the region from 84.5 to 86.5 minutes.</title>
        <authorList>
            <person name="Daniels D.L."/>
            <person name="Plunkett G. III"/>
            <person name="Burland V.D."/>
            <person name="Blattner F.R."/>
        </authorList>
    </citation>
    <scope>NUCLEOTIDE SEQUENCE [LARGE SCALE GENOMIC DNA]</scope>
    <source>
        <strain>K12 / MG1655 / ATCC 47076</strain>
    </source>
</reference>
<reference key="4">
    <citation type="journal article" date="1997" name="Science">
        <title>The complete genome sequence of Escherichia coli K-12.</title>
        <authorList>
            <person name="Blattner F.R."/>
            <person name="Plunkett G. III"/>
            <person name="Bloch C.A."/>
            <person name="Perna N.T."/>
            <person name="Burland V."/>
            <person name="Riley M."/>
            <person name="Collado-Vides J."/>
            <person name="Glasner J.D."/>
            <person name="Rode C.K."/>
            <person name="Mayhew G.F."/>
            <person name="Gregor J."/>
            <person name="Davis N.W."/>
            <person name="Kirkpatrick H.A."/>
            <person name="Goeden M.A."/>
            <person name="Rose D.J."/>
            <person name="Mau B."/>
            <person name="Shao Y."/>
        </authorList>
    </citation>
    <scope>NUCLEOTIDE SEQUENCE [LARGE SCALE GENOMIC DNA]</scope>
    <scope>SEQUENCE REVISION</scope>
    <source>
        <strain>K12 / MG1655 / ATCC 47076</strain>
    </source>
</reference>
<reference key="5">
    <citation type="journal article" date="2006" name="Mol. Syst. Biol.">
        <title>Highly accurate genome sequences of Escherichia coli K-12 strains MG1655 and W3110.</title>
        <authorList>
            <person name="Hayashi K."/>
            <person name="Morooka N."/>
            <person name="Yamamoto Y."/>
            <person name="Fujita K."/>
            <person name="Isono K."/>
            <person name="Choi S."/>
            <person name="Ohtsubo E."/>
            <person name="Baba T."/>
            <person name="Wanner B.L."/>
            <person name="Mori H."/>
            <person name="Horiuchi T."/>
        </authorList>
    </citation>
    <scope>NUCLEOTIDE SEQUENCE [LARGE SCALE GENOMIC DNA]</scope>
    <source>
        <strain>K12 / W3110 / ATCC 27325 / DSM 5911</strain>
    </source>
</reference>
<reference key="6">
    <citation type="journal article" date="2001" name="J. Biol. Chem.">
        <title>TatB and TatC form a functional and structural unit of the twin-arginine translocase from Escherichia coli.</title>
        <authorList>
            <person name="Bolhuis A."/>
            <person name="Mathers J.E."/>
            <person name="Thomas J.D."/>
            <person name="Barrett C.M."/>
            <person name="Robinson C."/>
        </authorList>
    </citation>
    <scope>PROTEIN SEQUENCE OF 2-6</scope>
    <scope>INTERACTION WITH TATA AND TATB</scope>
    <source>
        <strain>K12 / MC4100 / ATCC 35695 / DSM 6574</strain>
    </source>
</reference>
<reference key="7">
    <citation type="journal article" date="1998" name="J. Biol. Chem.">
        <title>An essential component of a novel bacterial protein export system with homologues in plastids and mitochondria.</title>
        <authorList>
            <person name="Bogsch E.G."/>
            <person name="Sargent F."/>
            <person name="Stanley N.R."/>
            <person name="Berks B.C."/>
            <person name="Robinson C."/>
            <person name="Palmer T."/>
        </authorList>
    </citation>
    <scope>FUNCTION</scope>
    <scope>DISRUPTION PHENOTYPE</scope>
</reference>
<reference key="8">
    <citation type="journal article" date="2000" name="Mol. Microbiol.">
        <title>The Tat protein export pathway.</title>
        <authorList>
            <person name="Berks B.C."/>
            <person name="Sargent F."/>
            <person name="Palmer T."/>
        </authorList>
    </citation>
    <scope>REVIEW</scope>
</reference>
<reference key="9">
    <citation type="journal article" date="2001" name="FEBS Lett.">
        <title>Membrane interactions and self-association of the TatA and TatB components of the twin-arginine translocation pathway.</title>
        <authorList>
            <person name="De Leeuw E."/>
            <person name="Porcelli I."/>
            <person name="Sargent F."/>
            <person name="Palmer T."/>
            <person name="Berks B.C."/>
        </authorList>
    </citation>
    <scope>SUBCELLULAR LOCATION</scope>
</reference>
<reference key="10">
    <citation type="journal article" date="2001" name="J. Bacteriol.">
        <title>Constitutive expression of Escherichia coli tat genes indicates an important role for the twin-arginine translocase during aerobic and anaerobic growth.</title>
        <authorList>
            <person name="Jack R.L."/>
            <person name="Sargent F."/>
            <person name="Berks B.C."/>
            <person name="Sawers G."/>
            <person name="Palmer T."/>
        </authorList>
    </citation>
    <scope>INDUCTION</scope>
</reference>
<reference key="11">
    <citation type="journal article" date="2002" name="J. Biol. Chem.">
        <title>Essential cytoplasmic domains in the Escherichia coli TatC protein.</title>
        <authorList>
            <person name="Allen S.C."/>
            <person name="Barrett C.M."/>
            <person name="Ray N."/>
            <person name="Robinson C."/>
        </authorList>
    </citation>
    <scope>MUTAGENESIS OF ARG-17; LEU-20 AND 20-LEU--ASN-22</scope>
</reference>
<reference key="12">
    <citation type="journal article" date="2002" name="J. Mol. Biol.">
        <title>In vivo dissection of the Tat translocation pathway in Escherichia coli.</title>
        <authorList>
            <person name="Ize B."/>
            <person name="Gerard F."/>
            <person name="Zhang M."/>
            <person name="Chanal A."/>
            <person name="Voulhoux R."/>
            <person name="Palmer T."/>
            <person name="Filloux A."/>
            <person name="Wu L.F."/>
        </authorList>
    </citation>
    <scope>FUNCTION</scope>
    <source>
        <strain>K12 / MC4100 / ATCC 35695 / DSM 6574</strain>
    </source>
</reference>
<reference key="13">
    <citation type="journal article" date="2002" name="Mol. Microbiol.">
        <title>Functional complexity of the twin-arginine translocase TatC component revealed by site-directed mutagenesis.</title>
        <authorList>
            <person name="Buchanan G."/>
            <person name="Leeuw E."/>
            <person name="Stanley N.R."/>
            <person name="Wexler M."/>
            <person name="Berks B.C."/>
            <person name="Sargent F."/>
            <person name="Palmer T."/>
        </authorList>
    </citation>
    <scope>MUTAGENESIS OF PHE-94; GLU-103 AND ASP-211</scope>
</reference>
<reference key="14">
    <citation type="journal article" date="2002" name="Proc. Natl. Acad. Sci. U.S.A.">
        <title>Rapid topology mapping of Escherichia coli inner-membrane proteins by prediction and PhoA/GFP fusion analysis.</title>
        <authorList>
            <person name="Drew D."/>
            <person name="Sjoestrand D."/>
            <person name="Nilsson J."/>
            <person name="Urbig T."/>
            <person name="Chin C.-N."/>
            <person name="de Gier J.-W."/>
            <person name="von Heijne G."/>
        </authorList>
    </citation>
    <scope>TOPOLOGY</scope>
    <source>
        <strain>K12 / JM109 / ATCC 53323</strain>
    </source>
</reference>
<reference key="15">
    <citation type="journal article" date="2003" name="Mol. Cell">
        <title>Differential interactions between a twin-arginine signal peptide and its translocase in Escherichia coli.</title>
        <authorList>
            <person name="Alami M."/>
            <person name="Luke I."/>
            <person name="Deitermann S."/>
            <person name="Eisner G."/>
            <person name="Koch H.G."/>
            <person name="Brunner J."/>
            <person name="Muller M."/>
        </authorList>
    </citation>
    <scope>FUNCTION</scope>
</reference>
<reference key="16">
    <citation type="journal article" date="2004" name="FEBS Lett.">
        <title>Localization of the Tat translocon components in Escherichia coli.</title>
        <authorList>
            <person name="Berthelmann F."/>
            <person name="Bruser T."/>
        </authorList>
    </citation>
    <scope>SUBUNIT</scope>
    <scope>SUBCELLULAR LOCATION</scope>
    <source>
        <strain>K12 / MC4100 / ATCC 35695 / DSM 6574</strain>
    </source>
</reference>
<reference key="17">
    <citation type="journal article" date="2005" name="J. Mol. Biol.">
        <title>The Escherichia coli twin-arginine translocation apparatus incorporates a distinct form of TatABC complex, spectrum of modular TatA complexes and minor TatAB complex.</title>
        <authorList>
            <person name="Oates J."/>
            <person name="Barrett C.M."/>
            <person name="Barnett J.P."/>
            <person name="Byrne K.G."/>
            <person name="Bolhuis A."/>
            <person name="Robinson C."/>
        </authorList>
    </citation>
    <scope>SUBUNIT</scope>
    <source>
        <strain>K12 / MC4100 / ATCC 35695 / DSM 6574</strain>
    </source>
</reference>
<reference key="18">
    <citation type="journal article" date="2005" name="J. Mol. Biol.">
        <title>The core TatABC complex of the twin-arginine translocase in Escherichia coli: TatC drives assembly whereas TatA is essential for stability.</title>
        <authorList>
            <person name="Mangels D."/>
            <person name="Mathers J.E."/>
            <person name="Bolhuis A."/>
            <person name="Robinson C."/>
        </authorList>
    </citation>
    <scope>SUBUNIT</scope>
</reference>
<reference key="19">
    <citation type="journal article" date="2005" name="Science">
        <title>Global topology analysis of the Escherichia coli inner membrane proteome.</title>
        <authorList>
            <person name="Daley D.O."/>
            <person name="Rapp M."/>
            <person name="Granseth E."/>
            <person name="Melen K."/>
            <person name="Drew D."/>
            <person name="von Heijne G."/>
        </authorList>
    </citation>
    <scope>TOPOLOGY [LARGE SCALE ANALYSIS]</scope>
    <source>
        <strain>K12 / MG1655 / ATCC 47076</strain>
    </source>
</reference>
<reference key="20">
    <citation type="journal article" date="2007" name="FEBS Lett.">
        <title>TatBC, TatB, and TatC form structurally autonomous units within the twin arginine protein transport system of Escherichia coli.</title>
        <authorList>
            <person name="Orriss G.L."/>
            <person name="Tarry M.J."/>
            <person name="Ize B."/>
            <person name="Sargent F."/>
            <person name="Lea S.M."/>
            <person name="Palmer T."/>
            <person name="Berks B.C."/>
        </authorList>
    </citation>
    <scope>SUBUNIT</scope>
    <source>
        <strain>K12 / MC4100 / ATCC 35695 / DSM 6574</strain>
    </source>
</reference>
<reference key="21">
    <citation type="journal article" date="2009" name="Proc. Natl. Acad. Sci. U.S.A.">
        <title>Structural analysis of substrate binding by the TatBC component of the twin-arginine protein transport system.</title>
        <authorList>
            <person name="Tarry M.J."/>
            <person name="Schafer E."/>
            <person name="Chen S."/>
            <person name="Buchanan G."/>
            <person name="Greene N.P."/>
            <person name="Lea S.M."/>
            <person name="Palmer T."/>
            <person name="Saibil H.R."/>
            <person name="Berks B.C."/>
        </authorList>
    </citation>
    <scope>FUNCTION</scope>
    <scope>SUBSTRATE-BINDING</scope>
</reference>
<reference key="22">
    <citation type="journal article" date="2010" name="Mol. Biol. Cell">
        <title>TatB functions as an oligomeric binding site for folded Tat precursor proteins.</title>
        <authorList>
            <person name="Maurer C."/>
            <person name="Panahandeh S."/>
            <person name="Jungkamp A.C."/>
            <person name="Moser M."/>
            <person name="Muller M."/>
        </authorList>
    </citation>
    <scope>FUNCTION</scope>
</reference>
<reference key="23">
    <citation type="journal article" date="2010" name="PLoS ONE">
        <title>Visualizing interactions along the Escherichia coli twin-arginine translocation pathway using protein fragment complementation.</title>
        <authorList>
            <person name="Kostecki J.S."/>
            <person name="Li H."/>
            <person name="Turner R.J."/>
            <person name="DeLisa M.P."/>
        </authorList>
    </citation>
    <scope>SUBUNIT</scope>
    <scope>INTERACTION WITH DMSA AND DMSD</scope>
    <scope>SUBCELLULAR LOCATION</scope>
</reference>
<accession>P69423</accession>
<accession>P27857</accession>
<accession>P27858</accession>
<accession>P76765</accession>
<accession>P76766</accession>
<accession>Q2M8E3</accession>
<feature type="initiator methionine" description="Removed" evidence="4">
    <location>
        <position position="1"/>
    </location>
</feature>
<feature type="chain" id="PRO_0000098083" description="Sec-independent protein translocase protein TatC">
    <location>
        <begin position="2"/>
        <end position="258"/>
    </location>
</feature>
<feature type="topological domain" description="Cytoplasmic" evidence="1">
    <location>
        <begin position="2"/>
        <end position="23"/>
    </location>
</feature>
<feature type="transmembrane region" description="Helical" evidence="2">
    <location>
        <begin position="24"/>
        <end position="44"/>
    </location>
</feature>
<feature type="topological domain" description="Periplasmic" evidence="1">
    <location>
        <begin position="45"/>
        <end position="75"/>
    </location>
</feature>
<feature type="transmembrane region" description="Helical" evidence="2">
    <location>
        <begin position="76"/>
        <end position="96"/>
    </location>
</feature>
<feature type="topological domain" description="Cytoplasmic" evidence="1">
    <location>
        <begin position="97"/>
        <end position="115"/>
    </location>
</feature>
<feature type="transmembrane region" description="Helical" evidence="2">
    <location>
        <begin position="116"/>
        <end position="136"/>
    </location>
</feature>
<feature type="topological domain" description="Periplasmic" evidence="1">
    <location>
        <begin position="137"/>
        <end position="156"/>
    </location>
</feature>
<feature type="transmembrane region" description="Helical" evidence="2">
    <location>
        <begin position="157"/>
        <end position="177"/>
    </location>
</feature>
<feature type="topological domain" description="Cytoplasmic" evidence="1">
    <location>
        <begin position="178"/>
        <end position="192"/>
    </location>
</feature>
<feature type="transmembrane region" description="Helical" evidence="2">
    <location>
        <begin position="193"/>
        <end position="210"/>
    </location>
</feature>
<feature type="topological domain" description="Periplasmic" evidence="1">
    <location>
        <position position="211"/>
    </location>
</feature>
<feature type="transmembrane region" description="Helical" evidence="2">
    <location>
        <begin position="212"/>
        <end position="232"/>
    </location>
</feature>
<feature type="topological domain" description="Cytoplasmic" evidence="1">
    <location>
        <begin position="233"/>
        <end position="258"/>
    </location>
</feature>
<feature type="mutagenesis site" description="No anaerobic growth and no TorA export." evidence="6">
    <original>R</original>
    <variation>A</variation>
    <location>
        <position position="17"/>
    </location>
</feature>
<feature type="mutagenesis site" description="No anaerobic growth and 75% decrease in TorA export." evidence="6">
    <location>
        <begin position="20"/>
        <end position="22"/>
    </location>
</feature>
<feature type="mutagenesis site" description="25% decrease in anaerobic growth and 75% decrease in TorA export." evidence="6">
    <original>L</original>
    <variation>A</variation>
    <location>
        <position position="20"/>
    </location>
</feature>
<feature type="mutagenesis site" description="Loss of function." evidence="8">
    <original>F</original>
    <variation>A</variation>
    <variation>L</variation>
    <location>
        <position position="94"/>
    </location>
</feature>
<feature type="mutagenesis site" description="Export of TorA restored; when associated with A-211." evidence="8">
    <original>F</original>
    <variation>A</variation>
    <location>
        <position position="94"/>
    </location>
</feature>
<feature type="mutagenesis site" description="Loss of function." evidence="8">
    <original>E</original>
    <variation>A</variation>
    <variation>D</variation>
    <variation>R</variation>
    <location>
        <position position="103"/>
    </location>
</feature>
<feature type="mutagenesis site" description="Export of TorA restored; when associated with A-211." evidence="8">
    <original>E</original>
    <variation>A</variation>
    <location>
        <position position="103"/>
    </location>
</feature>
<feature type="mutagenesis site" description="Severely retard but does not abolish activity." evidence="8">
    <original>E</original>
    <variation>Q</variation>
    <location>
        <position position="103"/>
    </location>
</feature>
<feature type="mutagenesis site" description="Export activity of TorA blocked. Export of TorA restored; when associated with A-94 or A-103." evidence="8">
    <original>D</original>
    <variation>A</variation>
    <location>
        <position position="211"/>
    </location>
</feature>
<feature type="mutagenesis site" description="Decrease in TorA export activity." evidence="8">
    <original>D</original>
    <variation>E</variation>
    <variation>N</variation>
    <location>
        <position position="211"/>
    </location>
</feature>
<gene>
    <name evidence="2" type="primary">tatC</name>
    <name type="synonym">mttB</name>
    <name type="synonym">yigU</name>
    <name type="synonym">yigV</name>
    <name type="ordered locus">b3839</name>
    <name type="ordered locus">JW3815</name>
</gene>
<protein>
    <recommendedName>
        <fullName evidence="2">Sec-independent protein translocase protein TatC</fullName>
    </recommendedName>
</protein>
<keyword id="KW-0997">Cell inner membrane</keyword>
<keyword id="KW-1003">Cell membrane</keyword>
<keyword id="KW-0903">Direct protein sequencing</keyword>
<keyword id="KW-0472">Membrane</keyword>
<keyword id="KW-0653">Protein transport</keyword>
<keyword id="KW-1185">Reference proteome</keyword>
<keyword id="KW-0811">Translocation</keyword>
<keyword id="KW-0812">Transmembrane</keyword>
<keyword id="KW-1133">Transmembrane helix</keyword>
<keyword id="KW-0813">Transport</keyword>
<comment type="function">
    <text evidence="2 7 9 14 16 17">Part of the twin-arginine translocation (Tat) system that transports large folded proteins containing a characteristic twin-arginine motif in their signal peptide across membranes. Together with TatB, TatC is part of a receptor directly interacting with Tat signal peptides.</text>
</comment>
<comment type="subunit">
    <text evidence="2 4 10 11 12 13 15">The Tat system comprises two distinct complexes: a TatABC complex, containing multiple copies of TatA, TatB and TatC subunits, and a separate TatA complex, containing only TatA subunits. Substrates initially bind to the TatABC complex, which probably triggers association of the separate TatA complex to form the active translocon. TatC can form a distinct, stable, multimeric complex independent of TatA and TatB. Each of TatA, TatB and TatC are able to interact in pairs without the third partner. Interacts with the signal sequence of DmsA and DmsD.</text>
</comment>
<comment type="interaction">
    <interactant intactId="EBI-4411641">
        <id>P69423</id>
    </interactant>
    <interactant intactId="EBI-4411542">
        <id>P69428</id>
        <label>tatA</label>
    </interactant>
    <organismsDiffer>false</organismsDiffer>
    <experiments>2</experiments>
</comment>
<comment type="interaction">
    <interactant intactId="EBI-4411641">
        <id>P69423</id>
    </interactant>
    <interactant intactId="EBI-4411577">
        <id>P69425</id>
        <label>tatB</label>
    </interactant>
    <organismsDiffer>false</organismsDiffer>
    <experiments>9</experiments>
</comment>
<comment type="subcellular location">
    <subcellularLocation>
        <location evidence="2 5 10 15">Cell inner membrane</location>
        <topology evidence="2 5 10 15">Multi-pass membrane protein</topology>
    </subcellularLocation>
    <text>Localizes at the cell poles.</text>
</comment>
<comment type="induction">
    <text evidence="3">Constitutively expressed.</text>
</comment>
<comment type="disruption phenotype">
    <text evidence="17">Disruption blocks the export of at least five twin-arginine-containing precursor proteins that are predicted to bind redox cofactors, and hence fold prior to translocation. Disruption does not affect the Sec pathway.</text>
</comment>
<comment type="similarity">
    <text evidence="2">Belongs to the TatC family.</text>
</comment>
<organism>
    <name type="scientific">Escherichia coli (strain K12)</name>
    <dbReference type="NCBI Taxonomy" id="83333"/>
    <lineage>
        <taxon>Bacteria</taxon>
        <taxon>Pseudomonadati</taxon>
        <taxon>Pseudomonadota</taxon>
        <taxon>Gammaproteobacteria</taxon>
        <taxon>Enterobacterales</taxon>
        <taxon>Enterobacteriaceae</taxon>
        <taxon>Escherichia</taxon>
    </lineage>
</organism>
<proteinExistence type="evidence at protein level"/>
<evidence type="ECO:0000255" key="1"/>
<evidence type="ECO:0000255" key="2">
    <source>
        <dbReference type="HAMAP-Rule" id="MF_00902"/>
    </source>
</evidence>
<evidence type="ECO:0000269" key="3">
    <source>
    </source>
</evidence>
<evidence type="ECO:0000269" key="4">
    <source>
    </source>
</evidence>
<evidence type="ECO:0000269" key="5">
    <source>
    </source>
</evidence>
<evidence type="ECO:0000269" key="6">
    <source>
    </source>
</evidence>
<evidence type="ECO:0000269" key="7">
    <source>
    </source>
</evidence>
<evidence type="ECO:0000269" key="8">
    <source>
    </source>
</evidence>
<evidence type="ECO:0000269" key="9">
    <source>
    </source>
</evidence>
<evidence type="ECO:0000269" key="10">
    <source>
    </source>
</evidence>
<evidence type="ECO:0000269" key="11">
    <source>
    </source>
</evidence>
<evidence type="ECO:0000269" key="12">
    <source>
    </source>
</evidence>
<evidence type="ECO:0000269" key="13">
    <source>
    </source>
</evidence>
<evidence type="ECO:0000269" key="14">
    <source>
    </source>
</evidence>
<evidence type="ECO:0000269" key="15">
    <source>
    </source>
</evidence>
<evidence type="ECO:0000269" key="16">
    <source>
    </source>
</evidence>
<evidence type="ECO:0000269" key="17">
    <source>
    </source>
</evidence>
<name>TATC_ECOLI</name>
<sequence>MSVEDTQPLITHLIELRKRLLNCIIAVIVIFLCLVYFANDIYHLVSAPLIKQLPQGSTMIATDVASPFFTPIKLTFMVSLILSAPVILYQVWAFIAPALYKHERRLVVPLLVSSSLLFYIGMAFAYFVVFPLAFGFLANTAPEGVQVSTDIASYLSFVMALFMAFGVSFEVPVAIVLLCWMGITSPEDLRKKRPYVLVGAFVVGMLLTPPDVFSQTLLAIPMYCLFEIGVFFSRFYVGKGRNREEENDAEAESEKTEE</sequence>